<evidence type="ECO:0000250" key="1">
    <source>
        <dbReference type="UniProtKB" id="P0A9J4"/>
    </source>
</evidence>
<evidence type="ECO:0000250" key="2">
    <source>
        <dbReference type="UniProtKB" id="Q5JGC2"/>
    </source>
</evidence>
<evidence type="ECO:0000305" key="3"/>
<organism>
    <name type="scientific">Pyrococcus horikoshii (strain ATCC 700860 / DSM 12428 / JCM 9974 / NBRC 100139 / OT-3)</name>
    <dbReference type="NCBI Taxonomy" id="70601"/>
    <lineage>
        <taxon>Archaea</taxon>
        <taxon>Methanobacteriati</taxon>
        <taxon>Methanobacteriota</taxon>
        <taxon>Thermococci</taxon>
        <taxon>Thermococcales</taxon>
        <taxon>Thermococcaceae</taxon>
        <taxon>Pyrococcus</taxon>
    </lineage>
</organism>
<reference key="1">
    <citation type="journal article" date="1998" name="DNA Res.">
        <title>Complete sequence and gene organization of the genome of a hyper-thermophilic archaebacterium, Pyrococcus horikoshii OT3.</title>
        <authorList>
            <person name="Kawarabayasi Y."/>
            <person name="Sawada M."/>
            <person name="Horikawa H."/>
            <person name="Haikawa Y."/>
            <person name="Hino Y."/>
            <person name="Yamamoto S."/>
            <person name="Sekine M."/>
            <person name="Baba S."/>
            <person name="Kosugi H."/>
            <person name="Hosoyama A."/>
            <person name="Nagai Y."/>
            <person name="Sakai M."/>
            <person name="Ogura K."/>
            <person name="Otsuka R."/>
            <person name="Nakazawa H."/>
            <person name="Takamiya M."/>
            <person name="Ohfuku Y."/>
            <person name="Funahashi T."/>
            <person name="Tanaka T."/>
            <person name="Kudoh Y."/>
            <person name="Yamazaki J."/>
            <person name="Kushida N."/>
            <person name="Oguchi A."/>
            <person name="Aoki K."/>
            <person name="Yoshizawa T."/>
            <person name="Nakamura Y."/>
            <person name="Robb F.T."/>
            <person name="Horikoshi K."/>
            <person name="Masuchi Y."/>
            <person name="Shizuya H."/>
            <person name="Kikuchi H."/>
        </authorList>
    </citation>
    <scope>NUCLEOTIDE SEQUENCE [LARGE SCALE GENOMIC DNA]</scope>
    <source>
        <strain>ATCC 700860 / DSM 12428 / JCM 9974 / NBRC 100139 / OT-3</strain>
    </source>
</reference>
<gene>
    <name type="ordered locus">PH1390</name>
    <name type="ORF">PHAA019</name>
</gene>
<accession>O50098</accession>
<proteinExistence type="inferred from homology"/>
<protein>
    <recommendedName>
        <fullName evidence="2">2-dehydropantoate 2-reductase</fullName>
        <ecNumber evidence="2">1.1.1.169</ecNumber>
    </recommendedName>
    <alternativeName>
        <fullName evidence="2">Ketopantoate reductase</fullName>
        <shortName evidence="2">KPR</shortName>
    </alternativeName>
</protein>
<name>PANE_PYRHO</name>
<comment type="function">
    <text evidence="2">Catalyzes the NAD(P)H-dependent reduction of ketopantoate into pantoic acid.</text>
</comment>
<comment type="catalytic activity">
    <reaction evidence="2">
        <text>(R)-pantoate + NAD(+) = 2-dehydropantoate + NADH + H(+)</text>
        <dbReference type="Rhea" id="RHEA:61292"/>
        <dbReference type="ChEBI" id="CHEBI:11561"/>
        <dbReference type="ChEBI" id="CHEBI:15378"/>
        <dbReference type="ChEBI" id="CHEBI:15980"/>
        <dbReference type="ChEBI" id="CHEBI:57540"/>
        <dbReference type="ChEBI" id="CHEBI:57945"/>
    </reaction>
    <physiologicalReaction direction="right-to-left" evidence="2">
        <dbReference type="Rhea" id="RHEA:61294"/>
    </physiologicalReaction>
</comment>
<comment type="catalytic activity">
    <reaction evidence="2">
        <text>(R)-pantoate + NADP(+) = 2-dehydropantoate + NADPH + H(+)</text>
        <dbReference type="Rhea" id="RHEA:16233"/>
        <dbReference type="ChEBI" id="CHEBI:11561"/>
        <dbReference type="ChEBI" id="CHEBI:15378"/>
        <dbReference type="ChEBI" id="CHEBI:15980"/>
        <dbReference type="ChEBI" id="CHEBI:57783"/>
        <dbReference type="ChEBI" id="CHEBI:58349"/>
        <dbReference type="EC" id="1.1.1.169"/>
    </reaction>
    <physiologicalReaction direction="right-to-left" evidence="2">
        <dbReference type="Rhea" id="RHEA:16235"/>
    </physiologicalReaction>
</comment>
<comment type="pathway">
    <text evidence="2">Cofactor biosynthesis; coenzyme A biosynthesis.</text>
</comment>
<comment type="subcellular location">
    <subcellularLocation>
        <location evidence="2">Cytoplasm</location>
    </subcellularLocation>
</comment>
<comment type="similarity">
    <text evidence="3">Belongs to the ketopantoate reductase family.</text>
</comment>
<sequence>MKIYILGAGAIGSLVGGLLANVGEDVTLIGRGRHIEAINKRGLMIEGLTNLKINTKATTSIPGAKPDLIILTTKSYSTDDALNSAKDIVRDTWVLSLQNGIGNEEKIMELGGRPIGGITTNGAVLKEPGVVEWRGRGITLIGLYPKGRNEFVEEVKETFNRAGLETEVTENIIGWKWAKTIVNSAINPIGAILEVKNGAIKDNDYLLSIAVEVVKEGCKIALQNGIKFDISPMELLIQTLEQTRENYNSMLQDIWRGKRTEIDFINGKIIEYAKLVNLEAPLNFLLWALVKAKESLGGGSK</sequence>
<keyword id="KW-0173">Coenzyme A biosynthesis</keyword>
<keyword id="KW-0963">Cytoplasm</keyword>
<keyword id="KW-0520">NAD</keyword>
<keyword id="KW-0521">NADP</keyword>
<keyword id="KW-0560">Oxidoreductase</keyword>
<dbReference type="EC" id="1.1.1.169" evidence="2"/>
<dbReference type="EMBL" id="BA000001">
    <property type="protein sequence ID" value="BAA30496.1"/>
    <property type="molecule type" value="Genomic_DNA"/>
</dbReference>
<dbReference type="PIR" id="H71011">
    <property type="entry name" value="H71011"/>
</dbReference>
<dbReference type="RefSeq" id="WP_010885478.1">
    <property type="nucleotide sequence ID" value="NC_000961.1"/>
</dbReference>
<dbReference type="SMR" id="O50098"/>
<dbReference type="STRING" id="70601.gene:9378366"/>
<dbReference type="EnsemblBacteria" id="BAA30496">
    <property type="protein sequence ID" value="BAA30496"/>
    <property type="gene ID" value="BAA30496"/>
</dbReference>
<dbReference type="GeneID" id="1443716"/>
<dbReference type="KEGG" id="pho:PH1390"/>
<dbReference type="eggNOG" id="arCOG04139">
    <property type="taxonomic scope" value="Archaea"/>
</dbReference>
<dbReference type="OrthoDB" id="201845at2157"/>
<dbReference type="UniPathway" id="UPA00241"/>
<dbReference type="Proteomes" id="UP000000752">
    <property type="component" value="Chromosome"/>
</dbReference>
<dbReference type="GO" id="GO:0005737">
    <property type="term" value="C:cytoplasm"/>
    <property type="evidence" value="ECO:0007669"/>
    <property type="project" value="UniProtKB-SubCell"/>
</dbReference>
<dbReference type="GO" id="GO:0008677">
    <property type="term" value="F:2-dehydropantoate 2-reductase activity"/>
    <property type="evidence" value="ECO:0007669"/>
    <property type="project" value="UniProtKB-EC"/>
</dbReference>
<dbReference type="GO" id="GO:0050661">
    <property type="term" value="F:NADP binding"/>
    <property type="evidence" value="ECO:0007669"/>
    <property type="project" value="TreeGrafter"/>
</dbReference>
<dbReference type="GO" id="GO:0015937">
    <property type="term" value="P:coenzyme A biosynthetic process"/>
    <property type="evidence" value="ECO:0007669"/>
    <property type="project" value="UniProtKB-UniPathway"/>
</dbReference>
<dbReference type="GO" id="GO:0015940">
    <property type="term" value="P:pantothenate biosynthetic process"/>
    <property type="evidence" value="ECO:0007669"/>
    <property type="project" value="InterPro"/>
</dbReference>
<dbReference type="Gene3D" id="1.10.1040.10">
    <property type="entry name" value="N-(1-d-carboxylethyl)-l-norvaline Dehydrogenase, domain 2"/>
    <property type="match status" value="1"/>
</dbReference>
<dbReference type="Gene3D" id="3.40.50.720">
    <property type="entry name" value="NAD(P)-binding Rossmann-like Domain"/>
    <property type="match status" value="1"/>
</dbReference>
<dbReference type="InterPro" id="IPR008927">
    <property type="entry name" value="6-PGluconate_DH-like_C_sf"/>
</dbReference>
<dbReference type="InterPro" id="IPR013328">
    <property type="entry name" value="6PGD_dom2"/>
</dbReference>
<dbReference type="InterPro" id="IPR003710">
    <property type="entry name" value="ApbA"/>
</dbReference>
<dbReference type="InterPro" id="IPR050838">
    <property type="entry name" value="Ketopantoate_reductase"/>
</dbReference>
<dbReference type="InterPro" id="IPR013752">
    <property type="entry name" value="KPA_reductase"/>
</dbReference>
<dbReference type="InterPro" id="IPR013332">
    <property type="entry name" value="KPR_N"/>
</dbReference>
<dbReference type="InterPro" id="IPR036291">
    <property type="entry name" value="NAD(P)-bd_dom_sf"/>
</dbReference>
<dbReference type="NCBIfam" id="TIGR00745">
    <property type="entry name" value="apbA_panE"/>
    <property type="match status" value="1"/>
</dbReference>
<dbReference type="NCBIfam" id="NF005092">
    <property type="entry name" value="PRK06522.2-3"/>
    <property type="match status" value="1"/>
</dbReference>
<dbReference type="PANTHER" id="PTHR43765:SF2">
    <property type="entry name" value="2-DEHYDROPANTOATE 2-REDUCTASE"/>
    <property type="match status" value="1"/>
</dbReference>
<dbReference type="PANTHER" id="PTHR43765">
    <property type="entry name" value="2-DEHYDROPANTOATE 2-REDUCTASE-RELATED"/>
    <property type="match status" value="1"/>
</dbReference>
<dbReference type="Pfam" id="PF02558">
    <property type="entry name" value="ApbA"/>
    <property type="match status" value="1"/>
</dbReference>
<dbReference type="Pfam" id="PF08546">
    <property type="entry name" value="ApbA_C"/>
    <property type="match status" value="1"/>
</dbReference>
<dbReference type="SUPFAM" id="SSF48179">
    <property type="entry name" value="6-phosphogluconate dehydrogenase C-terminal domain-like"/>
    <property type="match status" value="1"/>
</dbReference>
<dbReference type="SUPFAM" id="SSF51735">
    <property type="entry name" value="NAD(P)-binding Rossmann-fold domains"/>
    <property type="match status" value="1"/>
</dbReference>
<feature type="chain" id="PRO_0000157326" description="2-dehydropantoate 2-reductase">
    <location>
        <begin position="1"/>
        <end position="301"/>
    </location>
</feature>
<feature type="active site" description="Proton donor" evidence="1">
    <location>
        <position position="179"/>
    </location>
</feature>
<feature type="binding site" evidence="2">
    <location>
        <begin position="7"/>
        <end position="12"/>
    </location>
    <ligand>
        <name>NADP(+)</name>
        <dbReference type="ChEBI" id="CHEBI:58349"/>
    </ligand>
</feature>
<feature type="binding site" evidence="2">
    <location>
        <position position="74"/>
    </location>
    <ligand>
        <name>NADP(+)</name>
        <dbReference type="ChEBI" id="CHEBI:58349"/>
    </ligand>
</feature>
<feature type="binding site" evidence="2">
    <location>
        <position position="99"/>
    </location>
    <ligand>
        <name>NADP(+)</name>
        <dbReference type="ChEBI" id="CHEBI:58349"/>
    </ligand>
</feature>
<feature type="binding site" evidence="2">
    <location>
        <position position="123"/>
    </location>
    <ligand>
        <name>NADP(+)</name>
        <dbReference type="ChEBI" id="CHEBI:58349"/>
    </ligand>
</feature>
<feature type="binding site" evidence="2">
    <location>
        <position position="179"/>
    </location>
    <ligand>
        <name>substrate</name>
    </ligand>
</feature>
<feature type="binding site" evidence="2">
    <location>
        <position position="183"/>
    </location>
    <ligand>
        <name>substrate</name>
    </ligand>
</feature>
<feature type="binding site" evidence="2">
    <location>
        <position position="187"/>
    </location>
    <ligand>
        <name>substrate</name>
    </ligand>
</feature>
<feature type="binding site" evidence="2">
    <location>
        <position position="197"/>
    </location>
    <ligand>
        <name>substrate</name>
    </ligand>
</feature>
<feature type="binding site" evidence="2">
    <location>
        <begin position="246"/>
        <end position="249"/>
    </location>
    <ligand>
        <name>substrate</name>
    </ligand>
</feature>
<feature type="binding site" evidence="2">
    <location>
        <position position="261"/>
    </location>
    <ligand>
        <name>NADP(+)</name>
        <dbReference type="ChEBI" id="CHEBI:58349"/>
    </ligand>
</feature>